<feature type="chain" id="PRO_0000213379" description="Adenosine 3'-phospho 5'-phosphosulfate transporter 2">
    <location>
        <begin position="1"/>
        <end position="401"/>
    </location>
</feature>
<feature type="transmembrane region" description="Helical" evidence="1">
    <location>
        <begin position="78"/>
        <end position="98"/>
    </location>
</feature>
<feature type="transmembrane region" description="Helical" evidence="1">
    <location>
        <begin position="114"/>
        <end position="134"/>
    </location>
</feature>
<feature type="transmembrane region" description="Helical" evidence="1">
    <location>
        <begin position="147"/>
        <end position="167"/>
    </location>
</feature>
<feature type="transmembrane region" description="Helical" evidence="1">
    <location>
        <begin position="170"/>
        <end position="190"/>
    </location>
</feature>
<feature type="transmembrane region" description="Helical" evidence="1">
    <location>
        <begin position="196"/>
        <end position="216"/>
    </location>
</feature>
<feature type="transmembrane region" description="Helical" evidence="1">
    <location>
        <begin position="223"/>
        <end position="243"/>
    </location>
</feature>
<feature type="transmembrane region" description="Helical" evidence="1">
    <location>
        <begin position="267"/>
        <end position="287"/>
    </location>
</feature>
<feature type="transmembrane region" description="Helical" evidence="1">
    <location>
        <begin position="298"/>
        <end position="317"/>
    </location>
</feature>
<feature type="transmembrane region" description="Helical" evidence="1">
    <location>
        <begin position="324"/>
        <end position="346"/>
    </location>
</feature>
<feature type="transmembrane region" description="Helical" evidence="1">
    <location>
        <begin position="349"/>
        <end position="369"/>
    </location>
</feature>
<feature type="glycosylation site" description="N-linked (GlcNAc...) asparagine" evidence="1">
    <location>
        <position position="12"/>
    </location>
</feature>
<feature type="glycosylation site" description="N-linked (GlcNAc...) asparagine" evidence="1">
    <location>
        <position position="71"/>
    </location>
</feature>
<feature type="glycosylation site" description="N-linked (GlcNAc...) asparagine" evidence="1">
    <location>
        <position position="254"/>
    </location>
</feature>
<feature type="splice variant" id="VSP_016193" description="In isoform 2." evidence="4">
    <original>IPGKTYMIIAFLT</original>
    <variation>YVVCFYFLIFHLY</variation>
    <location>
        <begin position="141"/>
        <end position="153"/>
    </location>
</feature>
<feature type="splice variant" id="VSP_016194" description="In isoform 2." evidence="4">
    <location>
        <begin position="154"/>
        <end position="401"/>
    </location>
</feature>
<feature type="splice variant" id="VSP_016195" description="In isoform 3." evidence="4">
    <original>VLYSYSIGFVYILLGLTCTSGLG</original>
    <variation>NITTSSYSGVFIFPNKLKIPLVL</variation>
    <location>
        <begin position="261"/>
        <end position="283"/>
    </location>
</feature>
<feature type="splice variant" id="VSP_016196" description="In isoform 3." evidence="4">
    <location>
        <begin position="284"/>
        <end position="401"/>
    </location>
</feature>
<reference key="1">
    <citation type="journal article" date="2006" name="J. Biol. Chem.">
        <title>Molecular cloning and characterization of a novel 3'-phosphoadenosine 5'-phosphosulfate transporter, PAPST2.</title>
        <authorList>
            <person name="Kamiyama S."/>
            <person name="Sasaki N."/>
            <person name="Goda E."/>
            <person name="Ui-Tei K."/>
            <person name="Saigo K."/>
            <person name="Narimatsu H."/>
            <person name="Jigami Y."/>
            <person name="Kannagi R."/>
            <person name="Irimura T."/>
            <person name="Nishihara S."/>
        </authorList>
    </citation>
    <scope>NUCLEOTIDE SEQUENCE [MRNA] (ISOFORM 1)</scope>
    <scope>FUNCTION</scope>
    <scope>TRANSPORTER ACTIVITY</scope>
    <scope>BIOPHYSICOCHEMICAL PROPERTIES</scope>
    <scope>SUBCELLULAR LOCATION</scope>
    <scope>TISSUE SPECIFICITY</scope>
    <source>
        <tissue>Colon</tissue>
    </source>
</reference>
<reference key="2">
    <citation type="journal article" date="2000" name="Genome Res.">
        <title>Identification of novel human genes evolutionarily conserved in Caenorhabditis elegans by comparative proteomics.</title>
        <authorList>
            <person name="Lai C.-H."/>
            <person name="Chou C.-Y."/>
            <person name="Ch'ang L.-Y."/>
            <person name="Liu C.-S."/>
            <person name="Lin W.-C."/>
        </authorList>
    </citation>
    <scope>NUCLEOTIDE SEQUENCE [LARGE SCALE MRNA] (ISOFORM 1)</scope>
</reference>
<reference key="3">
    <citation type="journal article" date="2007" name="BMC Genomics">
        <title>The full-ORF clone resource of the German cDNA consortium.</title>
        <authorList>
            <person name="Bechtel S."/>
            <person name="Rosenfelder H."/>
            <person name="Duda A."/>
            <person name="Schmidt C.P."/>
            <person name="Ernst U."/>
            <person name="Wellenreuther R."/>
            <person name="Mehrle A."/>
            <person name="Schuster C."/>
            <person name="Bahr A."/>
            <person name="Bloecker H."/>
            <person name="Heubner D."/>
            <person name="Hoerlein A."/>
            <person name="Michel G."/>
            <person name="Wedler H."/>
            <person name="Koehrer K."/>
            <person name="Ottenwaelder B."/>
            <person name="Poustka A."/>
            <person name="Wiemann S."/>
            <person name="Schupp I."/>
        </authorList>
    </citation>
    <scope>NUCLEOTIDE SEQUENCE [LARGE SCALE MRNA] (ISOFORM 3)</scope>
    <scope>NUCLEOTIDE SEQUENCE [LARGE SCALE MRNA] OF 2-401 (ISOFORM 2)</scope>
    <source>
        <tissue>Endometrial tumor</tissue>
        <tissue>Liver</tissue>
    </source>
</reference>
<reference key="4">
    <citation type="journal article" date="2003" name="Nature">
        <title>The DNA sequence and analysis of human chromosome 6.</title>
        <authorList>
            <person name="Mungall A.J."/>
            <person name="Palmer S.A."/>
            <person name="Sims S.K."/>
            <person name="Edwards C.A."/>
            <person name="Ashurst J.L."/>
            <person name="Wilming L."/>
            <person name="Jones M.C."/>
            <person name="Horton R."/>
            <person name="Hunt S.E."/>
            <person name="Scott C.E."/>
            <person name="Gilbert J.G.R."/>
            <person name="Clamp M.E."/>
            <person name="Bethel G."/>
            <person name="Milne S."/>
            <person name="Ainscough R."/>
            <person name="Almeida J.P."/>
            <person name="Ambrose K.D."/>
            <person name="Andrews T.D."/>
            <person name="Ashwell R.I.S."/>
            <person name="Babbage A.K."/>
            <person name="Bagguley C.L."/>
            <person name="Bailey J."/>
            <person name="Banerjee R."/>
            <person name="Barker D.J."/>
            <person name="Barlow K.F."/>
            <person name="Bates K."/>
            <person name="Beare D.M."/>
            <person name="Beasley H."/>
            <person name="Beasley O."/>
            <person name="Bird C.P."/>
            <person name="Blakey S.E."/>
            <person name="Bray-Allen S."/>
            <person name="Brook J."/>
            <person name="Brown A.J."/>
            <person name="Brown J.Y."/>
            <person name="Burford D.C."/>
            <person name="Burrill W."/>
            <person name="Burton J."/>
            <person name="Carder C."/>
            <person name="Carter N.P."/>
            <person name="Chapman J.C."/>
            <person name="Clark S.Y."/>
            <person name="Clark G."/>
            <person name="Clee C.M."/>
            <person name="Clegg S."/>
            <person name="Cobley V."/>
            <person name="Collier R.E."/>
            <person name="Collins J.E."/>
            <person name="Colman L.K."/>
            <person name="Corby N.R."/>
            <person name="Coville G.J."/>
            <person name="Culley K.M."/>
            <person name="Dhami P."/>
            <person name="Davies J."/>
            <person name="Dunn M."/>
            <person name="Earthrowl M.E."/>
            <person name="Ellington A.E."/>
            <person name="Evans K.A."/>
            <person name="Faulkner L."/>
            <person name="Francis M.D."/>
            <person name="Frankish A."/>
            <person name="Frankland J."/>
            <person name="French L."/>
            <person name="Garner P."/>
            <person name="Garnett J."/>
            <person name="Ghori M.J."/>
            <person name="Gilby L.M."/>
            <person name="Gillson C.J."/>
            <person name="Glithero R.J."/>
            <person name="Grafham D.V."/>
            <person name="Grant M."/>
            <person name="Gribble S."/>
            <person name="Griffiths C."/>
            <person name="Griffiths M.N.D."/>
            <person name="Hall R."/>
            <person name="Halls K.S."/>
            <person name="Hammond S."/>
            <person name="Harley J.L."/>
            <person name="Hart E.A."/>
            <person name="Heath P.D."/>
            <person name="Heathcott R."/>
            <person name="Holmes S.J."/>
            <person name="Howden P.J."/>
            <person name="Howe K.L."/>
            <person name="Howell G.R."/>
            <person name="Huckle E."/>
            <person name="Humphray S.J."/>
            <person name="Humphries M.D."/>
            <person name="Hunt A.R."/>
            <person name="Johnson C.M."/>
            <person name="Joy A.A."/>
            <person name="Kay M."/>
            <person name="Keenan S.J."/>
            <person name="Kimberley A.M."/>
            <person name="King A."/>
            <person name="Laird G.K."/>
            <person name="Langford C."/>
            <person name="Lawlor S."/>
            <person name="Leongamornlert D.A."/>
            <person name="Leversha M."/>
            <person name="Lloyd C.R."/>
            <person name="Lloyd D.M."/>
            <person name="Loveland J.E."/>
            <person name="Lovell J."/>
            <person name="Martin S."/>
            <person name="Mashreghi-Mohammadi M."/>
            <person name="Maslen G.L."/>
            <person name="Matthews L."/>
            <person name="McCann O.T."/>
            <person name="McLaren S.J."/>
            <person name="McLay K."/>
            <person name="McMurray A."/>
            <person name="Moore M.J.F."/>
            <person name="Mullikin J.C."/>
            <person name="Niblett D."/>
            <person name="Nickerson T."/>
            <person name="Novik K.L."/>
            <person name="Oliver K."/>
            <person name="Overton-Larty E.K."/>
            <person name="Parker A."/>
            <person name="Patel R."/>
            <person name="Pearce A.V."/>
            <person name="Peck A.I."/>
            <person name="Phillimore B.J.C.T."/>
            <person name="Phillips S."/>
            <person name="Plumb R.W."/>
            <person name="Porter K.M."/>
            <person name="Ramsey Y."/>
            <person name="Ranby S.A."/>
            <person name="Rice C.M."/>
            <person name="Ross M.T."/>
            <person name="Searle S.M."/>
            <person name="Sehra H.K."/>
            <person name="Sheridan E."/>
            <person name="Skuce C.D."/>
            <person name="Smith S."/>
            <person name="Smith M."/>
            <person name="Spraggon L."/>
            <person name="Squares S.L."/>
            <person name="Steward C.A."/>
            <person name="Sycamore N."/>
            <person name="Tamlyn-Hall G."/>
            <person name="Tester J."/>
            <person name="Theaker A.J."/>
            <person name="Thomas D.W."/>
            <person name="Thorpe A."/>
            <person name="Tracey A."/>
            <person name="Tromans A."/>
            <person name="Tubby B."/>
            <person name="Wall M."/>
            <person name="Wallis J.M."/>
            <person name="West A.P."/>
            <person name="White S.S."/>
            <person name="Whitehead S.L."/>
            <person name="Whittaker H."/>
            <person name="Wild A."/>
            <person name="Willey D.J."/>
            <person name="Wilmer T.E."/>
            <person name="Wood J.M."/>
            <person name="Wray P.W."/>
            <person name="Wyatt J.C."/>
            <person name="Young L."/>
            <person name="Younger R.M."/>
            <person name="Bentley D.R."/>
            <person name="Coulson A."/>
            <person name="Durbin R.M."/>
            <person name="Hubbard T."/>
            <person name="Sulston J.E."/>
            <person name="Dunham I."/>
            <person name="Rogers J."/>
            <person name="Beck S."/>
        </authorList>
    </citation>
    <scope>NUCLEOTIDE SEQUENCE [LARGE SCALE GENOMIC DNA]</scope>
</reference>
<reference key="5">
    <citation type="journal article" date="2004" name="Genome Res.">
        <title>The status, quality, and expansion of the NIH full-length cDNA project: the Mammalian Gene Collection (MGC).</title>
        <authorList>
            <consortium name="The MGC Project Team"/>
        </authorList>
    </citation>
    <scope>NUCLEOTIDE SEQUENCE [LARGE SCALE MRNA] (ISOFORM 1)</scope>
    <source>
        <tissue>Kidney</tissue>
    </source>
</reference>
<protein>
    <recommendedName>
        <fullName evidence="6">Adenosine 3'-phospho 5'-phosphosulfate transporter 2</fullName>
    </recommendedName>
    <alternativeName>
        <fullName evidence="3">3'-phosphoadenosine 5'-phosphosulfate transporter</fullName>
    </alternativeName>
    <alternativeName>
        <fullName>PAPS transporter 2</fullName>
    </alternativeName>
    <alternativeName>
        <fullName evidence="7">Solute carrier family 35 member B3</fullName>
    </alternativeName>
</protein>
<evidence type="ECO:0000255" key="1"/>
<evidence type="ECO:0000269" key="2">
    <source>
    </source>
</evidence>
<evidence type="ECO:0000303" key="3">
    <source>
    </source>
</evidence>
<evidence type="ECO:0000303" key="4">
    <source>
    </source>
</evidence>
<evidence type="ECO:0000305" key="5"/>
<evidence type="ECO:0000305" key="6">
    <source>
    </source>
</evidence>
<evidence type="ECO:0000312" key="7">
    <source>
        <dbReference type="HGNC" id="HGNC:21601"/>
    </source>
</evidence>
<dbReference type="EMBL" id="AB231931">
    <property type="protein sequence ID" value="BAE93015.1"/>
    <property type="molecule type" value="mRNA"/>
</dbReference>
<dbReference type="EMBL" id="AF132953">
    <property type="protein sequence ID" value="AAD27728.1"/>
    <property type="status" value="ALT_FRAME"/>
    <property type="molecule type" value="mRNA"/>
</dbReference>
<dbReference type="EMBL" id="BX538271">
    <property type="protein sequence ID" value="CAD98078.1"/>
    <property type="molecule type" value="mRNA"/>
</dbReference>
<dbReference type="EMBL" id="BX641086">
    <property type="protein sequence ID" value="CAE46041.1"/>
    <property type="status" value="ALT_INIT"/>
    <property type="molecule type" value="mRNA"/>
</dbReference>
<dbReference type="EMBL" id="AL355815">
    <property type="status" value="NOT_ANNOTATED_CDS"/>
    <property type="molecule type" value="Genomic_DNA"/>
</dbReference>
<dbReference type="EMBL" id="BC006973">
    <property type="protein sequence ID" value="AAH06973.1"/>
    <property type="molecule type" value="mRNA"/>
</dbReference>
<dbReference type="CCDS" id="CCDS4508.1">
    <molecule id="Q9H1N7-1"/>
</dbReference>
<dbReference type="RefSeq" id="NP_001136012.1">
    <molecule id="Q9H1N7-1"/>
    <property type="nucleotide sequence ID" value="NM_001142540.2"/>
</dbReference>
<dbReference type="RefSeq" id="NP_001136013.1">
    <molecule id="Q9H1N7-1"/>
    <property type="nucleotide sequence ID" value="NM_001142541.3"/>
</dbReference>
<dbReference type="RefSeq" id="NP_001357405.1">
    <molecule id="Q9H1N7-1"/>
    <property type="nucleotide sequence ID" value="NM_001370476.2"/>
</dbReference>
<dbReference type="RefSeq" id="NP_057032.2">
    <molecule id="Q9H1N7-1"/>
    <property type="nucleotide sequence ID" value="NM_015948.4"/>
</dbReference>
<dbReference type="RefSeq" id="XP_005249214.1">
    <property type="nucleotide sequence ID" value="XM_005249157.2"/>
</dbReference>
<dbReference type="RefSeq" id="XP_006715165.1">
    <property type="nucleotide sequence ID" value="XM_006715102.3"/>
</dbReference>
<dbReference type="RefSeq" id="XP_016866399.1">
    <molecule id="Q9H1N7-1"/>
    <property type="nucleotide sequence ID" value="XM_017010910.2"/>
</dbReference>
<dbReference type="RefSeq" id="XP_016866400.1">
    <molecule id="Q9H1N7-1"/>
    <property type="nucleotide sequence ID" value="XM_017010911.2"/>
</dbReference>
<dbReference type="RefSeq" id="XP_054211513.1">
    <molecule id="Q9H1N7-1"/>
    <property type="nucleotide sequence ID" value="XM_054355538.1"/>
</dbReference>
<dbReference type="SMR" id="Q9H1N7"/>
<dbReference type="BioGRID" id="119208">
    <property type="interactions" value="7"/>
</dbReference>
<dbReference type="FunCoup" id="Q9H1N7">
    <property type="interactions" value="707"/>
</dbReference>
<dbReference type="IntAct" id="Q9H1N7">
    <property type="interactions" value="2"/>
</dbReference>
<dbReference type="STRING" id="9606.ENSP00000368981"/>
<dbReference type="TCDB" id="2.A.7.11.5">
    <property type="family name" value="the drug/metabolite transporter (dmt) superfamily"/>
</dbReference>
<dbReference type="GlyCosmos" id="Q9H1N7">
    <property type="glycosylation" value="3 sites, No reported glycans"/>
</dbReference>
<dbReference type="GlyGen" id="Q9H1N7">
    <property type="glycosylation" value="4 sites, 2 N-linked glycans (2 sites)"/>
</dbReference>
<dbReference type="iPTMnet" id="Q9H1N7"/>
<dbReference type="PhosphoSitePlus" id="Q9H1N7"/>
<dbReference type="BioMuta" id="SLC35B3"/>
<dbReference type="DMDM" id="74752580"/>
<dbReference type="jPOST" id="Q9H1N7"/>
<dbReference type="MassIVE" id="Q9H1N7"/>
<dbReference type="PaxDb" id="9606-ENSP00000368981"/>
<dbReference type="PeptideAtlas" id="Q9H1N7"/>
<dbReference type="ProteomicsDB" id="80431">
    <molecule id="Q9H1N7-1"/>
</dbReference>
<dbReference type="ProteomicsDB" id="80432">
    <molecule id="Q9H1N7-2"/>
</dbReference>
<dbReference type="ProteomicsDB" id="80433">
    <molecule id="Q9H1N7-3"/>
</dbReference>
<dbReference type="Antibodypedia" id="24732">
    <property type="antibodies" value="9 antibodies from 5 providers"/>
</dbReference>
<dbReference type="DNASU" id="51000"/>
<dbReference type="Ensembl" id="ENST00000379660.4">
    <molecule id="Q9H1N7-1"/>
    <property type="protein sequence ID" value="ENSP00000368981.4"/>
    <property type="gene ID" value="ENSG00000124786.13"/>
</dbReference>
<dbReference type="Ensembl" id="ENST00000644923.2">
    <molecule id="Q9H1N7-1"/>
    <property type="protein sequence ID" value="ENSP00000496368.1"/>
    <property type="gene ID" value="ENSG00000124786.13"/>
</dbReference>
<dbReference type="Ensembl" id="ENST00000648867.1">
    <molecule id="Q9H1N7-3"/>
    <property type="protein sequence ID" value="ENSP00000497645.1"/>
    <property type="gene ID" value="ENSG00000124786.13"/>
</dbReference>
<dbReference type="GeneID" id="51000"/>
<dbReference type="KEGG" id="hsa:51000"/>
<dbReference type="UCSC" id="uc003myb.5">
    <molecule id="Q9H1N7-1"/>
    <property type="organism name" value="human"/>
</dbReference>
<dbReference type="AGR" id="HGNC:21601"/>
<dbReference type="CTD" id="51000"/>
<dbReference type="DisGeNET" id="51000"/>
<dbReference type="GeneCards" id="SLC35B3"/>
<dbReference type="HGNC" id="HGNC:21601">
    <property type="gene designation" value="SLC35B3"/>
</dbReference>
<dbReference type="HPA" id="ENSG00000124786">
    <property type="expression patterns" value="Low tissue specificity"/>
</dbReference>
<dbReference type="MIM" id="610845">
    <property type="type" value="gene"/>
</dbReference>
<dbReference type="neXtProt" id="NX_Q9H1N7"/>
<dbReference type="OpenTargets" id="ENSG00000124786"/>
<dbReference type="PharmGKB" id="PA134889889"/>
<dbReference type="VEuPathDB" id="HostDB:ENSG00000124786"/>
<dbReference type="eggNOG" id="KOG1582">
    <property type="taxonomic scope" value="Eukaryota"/>
</dbReference>
<dbReference type="GeneTree" id="ENSGT00940000157040"/>
<dbReference type="HOGENOM" id="CLU_036019_2_0_1"/>
<dbReference type="InParanoid" id="Q9H1N7"/>
<dbReference type="OMA" id="YNRTTQF"/>
<dbReference type="OrthoDB" id="438495at2759"/>
<dbReference type="PAN-GO" id="Q9H1N7">
    <property type="GO annotations" value="3 GO annotations based on evolutionary models"/>
</dbReference>
<dbReference type="PhylomeDB" id="Q9H1N7"/>
<dbReference type="TreeFam" id="TF314523"/>
<dbReference type="PathwayCommons" id="Q9H1N7"/>
<dbReference type="Reactome" id="R-HSA-174362">
    <property type="pathway name" value="Transport and synthesis of PAPS"/>
</dbReference>
<dbReference type="Reactome" id="R-HSA-727802">
    <property type="pathway name" value="Transport of nucleotide sugars"/>
</dbReference>
<dbReference type="SABIO-RK" id="Q9H1N7"/>
<dbReference type="SignaLink" id="Q9H1N7"/>
<dbReference type="BioGRID-ORCS" id="51000">
    <property type="hits" value="12 hits in 1153 CRISPR screens"/>
</dbReference>
<dbReference type="ChiTaRS" id="SLC35B3">
    <property type="organism name" value="human"/>
</dbReference>
<dbReference type="GenomeRNAi" id="51000"/>
<dbReference type="Pharos" id="Q9H1N7">
    <property type="development level" value="Tdark"/>
</dbReference>
<dbReference type="PRO" id="PR:Q9H1N7"/>
<dbReference type="Proteomes" id="UP000005640">
    <property type="component" value="Chromosome 6"/>
</dbReference>
<dbReference type="RNAct" id="Q9H1N7">
    <property type="molecule type" value="protein"/>
</dbReference>
<dbReference type="Bgee" id="ENSG00000124786">
    <property type="expression patterns" value="Expressed in pancreatic ductal cell and 193 other cell types or tissues"/>
</dbReference>
<dbReference type="ExpressionAtlas" id="Q9H1N7">
    <property type="expression patterns" value="baseline and differential"/>
</dbReference>
<dbReference type="GO" id="GO:0005789">
    <property type="term" value="C:endoplasmic reticulum membrane"/>
    <property type="evidence" value="ECO:0000318"/>
    <property type="project" value="GO_Central"/>
</dbReference>
<dbReference type="GO" id="GO:0000139">
    <property type="term" value="C:Golgi membrane"/>
    <property type="evidence" value="ECO:0000314"/>
    <property type="project" value="UniProtKB"/>
</dbReference>
<dbReference type="GO" id="GO:0046964">
    <property type="term" value="F:3'-phosphoadenosine 5'-phosphosulfate transmembrane transporter activity"/>
    <property type="evidence" value="ECO:0000314"/>
    <property type="project" value="UniProtKB"/>
</dbReference>
<dbReference type="GO" id="GO:0015297">
    <property type="term" value="F:antiporter activity"/>
    <property type="evidence" value="ECO:0007669"/>
    <property type="project" value="UniProtKB-KW"/>
</dbReference>
<dbReference type="GO" id="GO:0046963">
    <property type="term" value="P:3'-phosphoadenosine 5'-phosphosulfate transport"/>
    <property type="evidence" value="ECO:0000318"/>
    <property type="project" value="GO_Central"/>
</dbReference>
<dbReference type="GO" id="GO:1902558">
    <property type="term" value="P:5'-adenylyl sulfate transmembrane transport"/>
    <property type="evidence" value="ECO:0000304"/>
    <property type="project" value="Reactome"/>
</dbReference>
<dbReference type="GO" id="GO:0055085">
    <property type="term" value="P:transmembrane transport"/>
    <property type="evidence" value="ECO:0000318"/>
    <property type="project" value="GO_Central"/>
</dbReference>
<dbReference type="InterPro" id="IPR013657">
    <property type="entry name" value="SCL35B1-4/HUT1"/>
</dbReference>
<dbReference type="PANTHER" id="PTHR10778:SF8">
    <property type="entry name" value="ADENOSINE 3'-PHOSPHO 5'-PHOSPHOSULFATE TRANSPORTER 2"/>
    <property type="match status" value="1"/>
</dbReference>
<dbReference type="PANTHER" id="PTHR10778">
    <property type="entry name" value="SOLUTE CARRIER FAMILY 35 MEMBER B"/>
    <property type="match status" value="1"/>
</dbReference>
<dbReference type="Pfam" id="PF08449">
    <property type="entry name" value="UAA"/>
    <property type="match status" value="1"/>
</dbReference>
<name>S35B3_HUMAN</name>
<keyword id="KW-0025">Alternative splicing</keyword>
<keyword id="KW-0050">Antiport</keyword>
<keyword id="KW-0325">Glycoprotein</keyword>
<keyword id="KW-0333">Golgi apparatus</keyword>
<keyword id="KW-0472">Membrane</keyword>
<keyword id="KW-1267">Proteomics identification</keyword>
<keyword id="KW-1185">Reference proteome</keyword>
<keyword id="KW-0812">Transmembrane</keyword>
<keyword id="KW-1133">Transmembrane helix</keyword>
<keyword id="KW-0813">Transport</keyword>
<sequence length="401" mass="44593">MDLTQQAKDIQNITVQETNKNNSESIECSKITMDLKFNNSRKYISITVPSKTQTMSPHIKSVDDVVVLGMNLSKFNKLTQFFICVAGVFVFYLIYGYLQELIFSVEGFKSCGWYLTLVQFAFYSIFGLIELQLIQDKRRRIPGKTYMIIAFLTVGTMGLSNTSLGYLNYPTQVIFKCCKLIPVMLGGVFIQGKRYNVADVSAAICMSLGLIWFTLADSTTAPNFNLTGVVLISLALCADAVIGNVQEKAMKLHNASNSEMVLYSYSIGFVYILLGLTCTSGLGPAVTFCAKNPVRTYGYAFLFSLTGYFGISFVLALIKIFGALIAVTVTTGRKAMTIVLSFIFFAKPFTFQYVWSGLLVVLGIFLNVYSKNMDKIRLPSLYDLINKSVEARKSRTLAQTV</sequence>
<accession>Q9H1N7</accession>
<accession>A6NKX9</accession>
<accession>Q1XH11</accession>
<accession>Q6MZJ0</accession>
<accession>Q7Z662</accession>
<accession>Q9Y308</accession>
<proteinExistence type="evidence at protein level"/>
<organism>
    <name type="scientific">Homo sapiens</name>
    <name type="common">Human</name>
    <dbReference type="NCBI Taxonomy" id="9606"/>
    <lineage>
        <taxon>Eukaryota</taxon>
        <taxon>Metazoa</taxon>
        <taxon>Chordata</taxon>
        <taxon>Craniata</taxon>
        <taxon>Vertebrata</taxon>
        <taxon>Euteleostomi</taxon>
        <taxon>Mammalia</taxon>
        <taxon>Eutheria</taxon>
        <taxon>Euarchontoglires</taxon>
        <taxon>Primates</taxon>
        <taxon>Haplorrhini</taxon>
        <taxon>Catarrhini</taxon>
        <taxon>Hominidae</taxon>
        <taxon>Homo</taxon>
    </lineage>
</organism>
<gene>
    <name evidence="7" type="primary">SLC35B3</name>
    <name evidence="7" type="synonym">C6orf196</name>
    <name evidence="3" type="synonym">PAPST2</name>
    <name type="ORF">CGI-19</name>
</gene>
<comment type="function">
    <text evidence="2">Probably functions as a 3'-phosphoadenylyl sulfate:adenosine 3',5'-bisphosphate antiporter at the Golgi membranes. Mediates the transport from the cytosol into the lumen of the Golgi of 3'-phosphoadenylyl sulfate/adenosine 3'-phospho 5'-phosphosulfate (PAPS), a universal sulfuryl donor for sulfation events that take place in that compartment.</text>
</comment>
<comment type="catalytic activity">
    <reaction evidence="6">
        <text>3'-phosphoadenylyl sulfate(in) + adenosine 3',5'-bisphosphate(out) = 3'-phosphoadenylyl sulfate(out) + adenosine 3',5'-bisphosphate(in)</text>
        <dbReference type="Rhea" id="RHEA:76063"/>
        <dbReference type="ChEBI" id="CHEBI:58339"/>
        <dbReference type="ChEBI" id="CHEBI:58343"/>
    </reaction>
</comment>
<comment type="biophysicochemical properties">
    <kinetics>
        <KM evidence="2">2.2 uM for 3'-phosphoadenylyl sulfate</KM>
    </kinetics>
</comment>
<comment type="subcellular location">
    <subcellularLocation>
        <location evidence="2">Golgi apparatus membrane</location>
        <topology evidence="1">Multi-pass membrane protein</topology>
    </subcellularLocation>
</comment>
<comment type="alternative products">
    <event type="alternative splicing"/>
    <isoform>
        <id>Q9H1N7-1</id>
        <name>1</name>
        <sequence type="displayed"/>
    </isoform>
    <isoform>
        <id>Q9H1N7-2</id>
        <name>2</name>
        <sequence type="described" ref="VSP_016193 VSP_016194"/>
    </isoform>
    <isoform>
        <id>Q9H1N7-3</id>
        <name>3</name>
        <sequence type="described" ref="VSP_016195 VSP_016196"/>
    </isoform>
</comment>
<comment type="tissue specificity">
    <text evidence="2">Preferentially and highly expressed in colon.</text>
</comment>
<comment type="similarity">
    <text evidence="5">Belongs to the nucleotide-sugar transporter family. SLC35B subfamily.</text>
</comment>
<comment type="sequence caution" evidence="5">
    <conflict type="frameshift">
        <sequence resource="EMBL-CDS" id="AAD27728"/>
    </conflict>
</comment>
<comment type="sequence caution" evidence="5">
    <conflict type="erroneous initiation">
        <sequence resource="EMBL-CDS" id="CAE46041"/>
    </conflict>
</comment>